<dbReference type="EMBL" id="CM002239">
    <property type="protein sequence ID" value="EAA33193.1"/>
    <property type="molecule type" value="Genomic_DNA"/>
</dbReference>
<dbReference type="RefSeq" id="XP_962429.1">
    <property type="nucleotide sequence ID" value="XM_957336.3"/>
</dbReference>
<dbReference type="SMR" id="Q7SA04"/>
<dbReference type="FunCoup" id="Q7SA04">
    <property type="interactions" value="189"/>
</dbReference>
<dbReference type="STRING" id="367110.Q7SA04"/>
<dbReference type="PaxDb" id="5141-EFNCRP00000008152"/>
<dbReference type="EnsemblFungi" id="EAA33193">
    <property type="protein sequence ID" value="EAA33193"/>
    <property type="gene ID" value="NCU07913"/>
</dbReference>
<dbReference type="GeneID" id="3878601"/>
<dbReference type="KEGG" id="ncr:NCU07913"/>
<dbReference type="VEuPathDB" id="FungiDB:NCU07913"/>
<dbReference type="HOGENOM" id="CLU_141774_0_1_1"/>
<dbReference type="InParanoid" id="Q7SA04"/>
<dbReference type="OMA" id="TTQHLWE"/>
<dbReference type="Proteomes" id="UP000001805">
    <property type="component" value="Chromosome 4, Linkage Group IV"/>
</dbReference>
<dbReference type="GO" id="GO:0000502">
    <property type="term" value="C:proteasome complex"/>
    <property type="evidence" value="ECO:0000318"/>
    <property type="project" value="GO_Central"/>
</dbReference>
<dbReference type="GO" id="GO:0008541">
    <property type="term" value="C:proteasome regulatory particle, lid subcomplex"/>
    <property type="evidence" value="ECO:0007669"/>
    <property type="project" value="InterPro"/>
</dbReference>
<dbReference type="GO" id="GO:0000724">
    <property type="term" value="P:double-strand break repair via homologous recombination"/>
    <property type="evidence" value="ECO:0000318"/>
    <property type="project" value="GO_Central"/>
</dbReference>
<dbReference type="GO" id="GO:0006406">
    <property type="term" value="P:mRNA export from nucleus"/>
    <property type="evidence" value="ECO:0007669"/>
    <property type="project" value="InterPro"/>
</dbReference>
<dbReference type="GO" id="GO:0043248">
    <property type="term" value="P:proteasome assembly"/>
    <property type="evidence" value="ECO:0007669"/>
    <property type="project" value="InterPro"/>
</dbReference>
<dbReference type="CDD" id="cd13768">
    <property type="entry name" value="DSS1_Sem1"/>
    <property type="match status" value="1"/>
</dbReference>
<dbReference type="InterPro" id="IPR007834">
    <property type="entry name" value="DSS1_SEM1"/>
</dbReference>
<dbReference type="PANTHER" id="PTHR16771">
    <property type="entry name" value="26 PROTEASOME COMPLEX SUBUNIT DSS1"/>
    <property type="match status" value="1"/>
</dbReference>
<dbReference type="PANTHER" id="PTHR16771:SF0">
    <property type="entry name" value="26S PROTEASOME COMPLEX SUBUNIT SEM1"/>
    <property type="match status" value="1"/>
</dbReference>
<dbReference type="Pfam" id="PF05160">
    <property type="entry name" value="DSS1_SEM1"/>
    <property type="match status" value="1"/>
</dbReference>
<dbReference type="SMART" id="SM01385">
    <property type="entry name" value="DSS1_SEM1"/>
    <property type="match status" value="1"/>
</dbReference>
<evidence type="ECO:0000250" key="1"/>
<evidence type="ECO:0000256" key="2">
    <source>
        <dbReference type="SAM" id="MobiDB-lite"/>
    </source>
</evidence>
<evidence type="ECO:0000305" key="3"/>
<feature type="chain" id="PRO_0000122968" description="Putative 26S proteasome complex subunit sem-1">
    <location>
        <begin position="1"/>
        <end position="91"/>
    </location>
</feature>
<feature type="region of interest" description="Disordered" evidence="2">
    <location>
        <begin position="1"/>
        <end position="73"/>
    </location>
</feature>
<feature type="compositionally biased region" description="Basic and acidic residues" evidence="2">
    <location>
        <begin position="8"/>
        <end position="28"/>
    </location>
</feature>
<feature type="compositionally biased region" description="Acidic residues" evidence="2">
    <location>
        <begin position="29"/>
        <end position="48"/>
    </location>
</feature>
<feature type="compositionally biased region" description="Acidic residues" evidence="2">
    <location>
        <begin position="63"/>
        <end position="72"/>
    </location>
</feature>
<protein>
    <recommendedName>
        <fullName>Putative 26S proteasome complex subunit sem-1</fullName>
    </recommendedName>
</protein>
<sequence length="91" mass="10414">MASTQPKNDAKSTEPKPEQPVTEKKTAVLEEDDEFEDFPVDDWEAEDTEAAKGNNEAKHLWEESWDDDDTSDDFSAQLKEELKKVEAAKKR</sequence>
<name>SEM1_NEUCR</name>
<proteinExistence type="inferred from homology"/>
<reference key="1">
    <citation type="journal article" date="2003" name="Nature">
        <title>The genome sequence of the filamentous fungus Neurospora crassa.</title>
        <authorList>
            <person name="Galagan J.E."/>
            <person name="Calvo S.E."/>
            <person name="Borkovich K.A."/>
            <person name="Selker E.U."/>
            <person name="Read N.D."/>
            <person name="Jaffe D.B."/>
            <person name="FitzHugh W."/>
            <person name="Ma L.-J."/>
            <person name="Smirnov S."/>
            <person name="Purcell S."/>
            <person name="Rehman B."/>
            <person name="Elkins T."/>
            <person name="Engels R."/>
            <person name="Wang S."/>
            <person name="Nielsen C.B."/>
            <person name="Butler J."/>
            <person name="Endrizzi M."/>
            <person name="Qui D."/>
            <person name="Ianakiev P."/>
            <person name="Bell-Pedersen D."/>
            <person name="Nelson M.A."/>
            <person name="Werner-Washburne M."/>
            <person name="Selitrennikoff C.P."/>
            <person name="Kinsey J.A."/>
            <person name="Braun E.L."/>
            <person name="Zelter A."/>
            <person name="Schulte U."/>
            <person name="Kothe G.O."/>
            <person name="Jedd G."/>
            <person name="Mewes H.-W."/>
            <person name="Staben C."/>
            <person name="Marcotte E."/>
            <person name="Greenberg D."/>
            <person name="Roy A."/>
            <person name="Foley K."/>
            <person name="Naylor J."/>
            <person name="Stange-Thomann N."/>
            <person name="Barrett R."/>
            <person name="Gnerre S."/>
            <person name="Kamal M."/>
            <person name="Kamvysselis M."/>
            <person name="Mauceli E.W."/>
            <person name="Bielke C."/>
            <person name="Rudd S."/>
            <person name="Frishman D."/>
            <person name="Krystofova S."/>
            <person name="Rasmussen C."/>
            <person name="Metzenberg R.L."/>
            <person name="Perkins D.D."/>
            <person name="Kroken S."/>
            <person name="Cogoni C."/>
            <person name="Macino G."/>
            <person name="Catcheside D.E.A."/>
            <person name="Li W."/>
            <person name="Pratt R.J."/>
            <person name="Osmani S.A."/>
            <person name="DeSouza C.P.C."/>
            <person name="Glass N.L."/>
            <person name="Orbach M.J."/>
            <person name="Berglund J.A."/>
            <person name="Voelker R."/>
            <person name="Yarden O."/>
            <person name="Plamann M."/>
            <person name="Seiler S."/>
            <person name="Dunlap J.C."/>
            <person name="Radford A."/>
            <person name="Aramayo R."/>
            <person name="Natvig D.O."/>
            <person name="Alex L.A."/>
            <person name="Mannhaupt G."/>
            <person name="Ebbole D.J."/>
            <person name="Freitag M."/>
            <person name="Paulsen I."/>
            <person name="Sachs M.S."/>
            <person name="Lander E.S."/>
            <person name="Nusbaum C."/>
            <person name="Birren B.W."/>
        </authorList>
    </citation>
    <scope>NUCLEOTIDE SEQUENCE [LARGE SCALE GENOMIC DNA]</scope>
    <source>
        <strain>ATCC 24698 / 74-OR23-1A / CBS 708.71 / DSM 1257 / FGSC 987</strain>
    </source>
</reference>
<organism>
    <name type="scientific">Neurospora crassa (strain ATCC 24698 / 74-OR23-1A / CBS 708.71 / DSM 1257 / FGSC 987)</name>
    <dbReference type="NCBI Taxonomy" id="367110"/>
    <lineage>
        <taxon>Eukaryota</taxon>
        <taxon>Fungi</taxon>
        <taxon>Dikarya</taxon>
        <taxon>Ascomycota</taxon>
        <taxon>Pezizomycotina</taxon>
        <taxon>Sordariomycetes</taxon>
        <taxon>Sordariomycetidae</taxon>
        <taxon>Sordariales</taxon>
        <taxon>Sordariaceae</taxon>
        <taxon>Neurospora</taxon>
    </lineage>
</organism>
<gene>
    <name type="primary">sem-1</name>
    <name type="ORF">NCU07913</name>
</gene>
<comment type="function">
    <text evidence="1">Subunit of the 26S proteasome which plays a role in ubiquitin-dependent proteolysis.</text>
</comment>
<comment type="subunit">
    <text evidence="1">Part of the 26S proteasome.</text>
</comment>
<comment type="similarity">
    <text evidence="3">Belongs to the DSS1/SEM1 family.</text>
</comment>
<keyword id="KW-0647">Proteasome</keyword>
<keyword id="KW-1185">Reference proteome</keyword>
<accession>Q7SA04</accession>